<sequence length="219" mass="24319">MIDLKTKAFDIAQNFTISLDGPAASGKGTVGLILAKKFSLKYFQSSIVYRQLAFNCINQQIDITDIDAVIALSKELKLDNNIDLENEDIGDIASQIAVISDVRNNLNENLINLVKTTPRIIMEGRDIGTVVAPDADLKIFITASPYVRAIRRYNQLQAKGKTCILDEIIQQIILRDKRDKERKAGPLLPALGAFIIDTSKLSAIEIVEEVTNYIKNKIT</sequence>
<protein>
    <recommendedName>
        <fullName evidence="1">Cytidylate kinase</fullName>
        <shortName evidence="1">CK</shortName>
        <ecNumber evidence="1">2.7.4.25</ecNumber>
    </recommendedName>
    <alternativeName>
        <fullName evidence="1">Cytidine monophosphate kinase</fullName>
        <shortName evidence="1">CMP kinase</shortName>
    </alternativeName>
</protein>
<evidence type="ECO:0000255" key="1">
    <source>
        <dbReference type="HAMAP-Rule" id="MF_00238"/>
    </source>
</evidence>
<reference key="1">
    <citation type="journal article" date="1998" name="Nature">
        <title>The genome sequence of Rickettsia prowazekii and the origin of mitochondria.</title>
        <authorList>
            <person name="Andersson S.G.E."/>
            <person name="Zomorodipour A."/>
            <person name="Andersson J.O."/>
            <person name="Sicheritz-Ponten T."/>
            <person name="Alsmark U.C.M."/>
            <person name="Podowski R.M."/>
            <person name="Naeslund A.K."/>
            <person name="Eriksson A.-S."/>
            <person name="Winkler H.H."/>
            <person name="Kurland C.G."/>
        </authorList>
    </citation>
    <scope>NUCLEOTIDE SEQUENCE [LARGE SCALE GENOMIC DNA]</scope>
    <source>
        <strain>Madrid E</strain>
    </source>
</reference>
<comment type="catalytic activity">
    <reaction evidence="1">
        <text>CMP + ATP = CDP + ADP</text>
        <dbReference type="Rhea" id="RHEA:11600"/>
        <dbReference type="ChEBI" id="CHEBI:30616"/>
        <dbReference type="ChEBI" id="CHEBI:58069"/>
        <dbReference type="ChEBI" id="CHEBI:60377"/>
        <dbReference type="ChEBI" id="CHEBI:456216"/>
        <dbReference type="EC" id="2.7.4.25"/>
    </reaction>
</comment>
<comment type="catalytic activity">
    <reaction evidence="1">
        <text>dCMP + ATP = dCDP + ADP</text>
        <dbReference type="Rhea" id="RHEA:25094"/>
        <dbReference type="ChEBI" id="CHEBI:30616"/>
        <dbReference type="ChEBI" id="CHEBI:57566"/>
        <dbReference type="ChEBI" id="CHEBI:58593"/>
        <dbReference type="ChEBI" id="CHEBI:456216"/>
        <dbReference type="EC" id="2.7.4.25"/>
    </reaction>
</comment>
<comment type="subcellular location">
    <subcellularLocation>
        <location evidence="1">Cytoplasm</location>
    </subcellularLocation>
</comment>
<comment type="similarity">
    <text evidence="1">Belongs to the cytidylate kinase family. Type 1 subfamily.</text>
</comment>
<name>KCY_RICPR</name>
<proteinExistence type="inferred from homology"/>
<keyword id="KW-0067">ATP-binding</keyword>
<keyword id="KW-0963">Cytoplasm</keyword>
<keyword id="KW-0418">Kinase</keyword>
<keyword id="KW-0547">Nucleotide-binding</keyword>
<keyword id="KW-1185">Reference proteome</keyword>
<keyword id="KW-0808">Transferase</keyword>
<accession>Q9ZD27</accession>
<gene>
    <name evidence="1" type="primary">cmk</name>
    <name type="ordered locus">RP522</name>
</gene>
<organism>
    <name type="scientific">Rickettsia prowazekii (strain Madrid E)</name>
    <dbReference type="NCBI Taxonomy" id="272947"/>
    <lineage>
        <taxon>Bacteria</taxon>
        <taxon>Pseudomonadati</taxon>
        <taxon>Pseudomonadota</taxon>
        <taxon>Alphaproteobacteria</taxon>
        <taxon>Rickettsiales</taxon>
        <taxon>Rickettsiaceae</taxon>
        <taxon>Rickettsieae</taxon>
        <taxon>Rickettsia</taxon>
        <taxon>typhus group</taxon>
    </lineage>
</organism>
<dbReference type="EC" id="2.7.4.25" evidence="1"/>
<dbReference type="EMBL" id="AJ235272">
    <property type="protein sequence ID" value="CAA14972.1"/>
    <property type="molecule type" value="Genomic_DNA"/>
</dbReference>
<dbReference type="PIR" id="B71656">
    <property type="entry name" value="B71656"/>
</dbReference>
<dbReference type="RefSeq" id="NP_220896.1">
    <property type="nucleotide sequence ID" value="NC_000963.1"/>
</dbReference>
<dbReference type="RefSeq" id="WP_004597789.1">
    <property type="nucleotide sequence ID" value="NC_000963.1"/>
</dbReference>
<dbReference type="SMR" id="Q9ZD27"/>
<dbReference type="STRING" id="272947.gene:17555602"/>
<dbReference type="EnsemblBacteria" id="CAA14972">
    <property type="protein sequence ID" value="CAA14972"/>
    <property type="gene ID" value="CAA14972"/>
</dbReference>
<dbReference type="GeneID" id="57569644"/>
<dbReference type="KEGG" id="rpr:RP522"/>
<dbReference type="PATRIC" id="fig|272947.5.peg.531"/>
<dbReference type="eggNOG" id="COG0283">
    <property type="taxonomic scope" value="Bacteria"/>
</dbReference>
<dbReference type="HOGENOM" id="CLU_079959_0_2_5"/>
<dbReference type="OrthoDB" id="9807434at2"/>
<dbReference type="Proteomes" id="UP000002480">
    <property type="component" value="Chromosome"/>
</dbReference>
<dbReference type="GO" id="GO:0005737">
    <property type="term" value="C:cytoplasm"/>
    <property type="evidence" value="ECO:0007669"/>
    <property type="project" value="UniProtKB-SubCell"/>
</dbReference>
<dbReference type="GO" id="GO:0005524">
    <property type="term" value="F:ATP binding"/>
    <property type="evidence" value="ECO:0007669"/>
    <property type="project" value="UniProtKB-UniRule"/>
</dbReference>
<dbReference type="GO" id="GO:0036430">
    <property type="term" value="F:CMP kinase activity"/>
    <property type="evidence" value="ECO:0007669"/>
    <property type="project" value="RHEA"/>
</dbReference>
<dbReference type="GO" id="GO:0036431">
    <property type="term" value="F:dCMP kinase activity"/>
    <property type="evidence" value="ECO:0007669"/>
    <property type="project" value="RHEA"/>
</dbReference>
<dbReference type="GO" id="GO:0006220">
    <property type="term" value="P:pyrimidine nucleotide metabolic process"/>
    <property type="evidence" value="ECO:0007669"/>
    <property type="project" value="UniProtKB-UniRule"/>
</dbReference>
<dbReference type="CDD" id="cd02020">
    <property type="entry name" value="CMPK"/>
    <property type="match status" value="1"/>
</dbReference>
<dbReference type="Gene3D" id="3.40.50.300">
    <property type="entry name" value="P-loop containing nucleotide triphosphate hydrolases"/>
    <property type="match status" value="1"/>
</dbReference>
<dbReference type="HAMAP" id="MF_00238">
    <property type="entry name" value="Cytidyl_kinase_type1"/>
    <property type="match status" value="1"/>
</dbReference>
<dbReference type="InterPro" id="IPR003136">
    <property type="entry name" value="Cytidylate_kin"/>
</dbReference>
<dbReference type="InterPro" id="IPR011994">
    <property type="entry name" value="Cytidylate_kinase_dom"/>
</dbReference>
<dbReference type="InterPro" id="IPR027417">
    <property type="entry name" value="P-loop_NTPase"/>
</dbReference>
<dbReference type="NCBIfam" id="TIGR00017">
    <property type="entry name" value="cmk"/>
    <property type="match status" value="1"/>
</dbReference>
<dbReference type="Pfam" id="PF02224">
    <property type="entry name" value="Cytidylate_kin"/>
    <property type="match status" value="1"/>
</dbReference>
<dbReference type="SUPFAM" id="SSF52540">
    <property type="entry name" value="P-loop containing nucleoside triphosphate hydrolases"/>
    <property type="match status" value="1"/>
</dbReference>
<feature type="chain" id="PRO_0000131966" description="Cytidylate kinase">
    <location>
        <begin position="1"/>
        <end position="219"/>
    </location>
</feature>
<feature type="binding site" evidence="1">
    <location>
        <begin position="21"/>
        <end position="29"/>
    </location>
    <ligand>
        <name>ATP</name>
        <dbReference type="ChEBI" id="CHEBI:30616"/>
    </ligand>
</feature>